<accession>O13850</accession>
<organism>
    <name type="scientific">Schizosaccharomyces pombe (strain 972 / ATCC 24843)</name>
    <name type="common">Fission yeast</name>
    <dbReference type="NCBI Taxonomy" id="284812"/>
    <lineage>
        <taxon>Eukaryota</taxon>
        <taxon>Fungi</taxon>
        <taxon>Dikarya</taxon>
        <taxon>Ascomycota</taxon>
        <taxon>Taphrinomycotina</taxon>
        <taxon>Schizosaccharomycetes</taxon>
        <taxon>Schizosaccharomycetales</taxon>
        <taxon>Schizosaccharomycetaceae</taxon>
        <taxon>Schizosaccharomyces</taxon>
    </lineage>
</organism>
<sequence>MLTLRSACQLTTKNLGLHKCISKTVISALGRRGYHSENYETSKISGKKALILENALEHVPQLGFTEDAIVQGGQALGYSNLSKALFPSGPMDLISYFFLKQRYALSSLKPHLTTIPETSGRVVQLIWSRLQGNRDIVQHLPQMIAICTYPSNLRKSLSSLAELSDEILYLAQDKSADFQWYTKRAAISAIYSASELFMSRDTSPNFEATYNFVQHRIQHAKALNDLRNDVLEWGSFQLNAVRSILRSRGI</sequence>
<reference key="1">
    <citation type="journal article" date="2002" name="Nature">
        <title>The genome sequence of Schizosaccharomyces pombe.</title>
        <authorList>
            <person name="Wood V."/>
            <person name="Gwilliam R."/>
            <person name="Rajandream M.A."/>
            <person name="Lyne M.H."/>
            <person name="Lyne R."/>
            <person name="Stewart A."/>
            <person name="Sgouros J.G."/>
            <person name="Peat N."/>
            <person name="Hayles J."/>
            <person name="Baker S.G."/>
            <person name="Basham D."/>
            <person name="Bowman S."/>
            <person name="Brooks K."/>
            <person name="Brown D."/>
            <person name="Brown S."/>
            <person name="Chillingworth T."/>
            <person name="Churcher C.M."/>
            <person name="Collins M."/>
            <person name="Connor R."/>
            <person name="Cronin A."/>
            <person name="Davis P."/>
            <person name="Feltwell T."/>
            <person name="Fraser A."/>
            <person name="Gentles S."/>
            <person name="Goble A."/>
            <person name="Hamlin N."/>
            <person name="Harris D.E."/>
            <person name="Hidalgo J."/>
            <person name="Hodgson G."/>
            <person name="Holroyd S."/>
            <person name="Hornsby T."/>
            <person name="Howarth S."/>
            <person name="Huckle E.J."/>
            <person name="Hunt S."/>
            <person name="Jagels K."/>
            <person name="James K.D."/>
            <person name="Jones L."/>
            <person name="Jones M."/>
            <person name="Leather S."/>
            <person name="McDonald S."/>
            <person name="McLean J."/>
            <person name="Mooney P."/>
            <person name="Moule S."/>
            <person name="Mungall K.L."/>
            <person name="Murphy L.D."/>
            <person name="Niblett D."/>
            <person name="Odell C."/>
            <person name="Oliver K."/>
            <person name="O'Neil S."/>
            <person name="Pearson D."/>
            <person name="Quail M.A."/>
            <person name="Rabbinowitsch E."/>
            <person name="Rutherford K.M."/>
            <person name="Rutter S."/>
            <person name="Saunders D."/>
            <person name="Seeger K."/>
            <person name="Sharp S."/>
            <person name="Skelton J."/>
            <person name="Simmonds M.N."/>
            <person name="Squares R."/>
            <person name="Squares S."/>
            <person name="Stevens K."/>
            <person name="Taylor K."/>
            <person name="Taylor R.G."/>
            <person name="Tivey A."/>
            <person name="Walsh S.V."/>
            <person name="Warren T."/>
            <person name="Whitehead S."/>
            <person name="Woodward J.R."/>
            <person name="Volckaert G."/>
            <person name="Aert R."/>
            <person name="Robben J."/>
            <person name="Grymonprez B."/>
            <person name="Weltjens I."/>
            <person name="Vanstreels E."/>
            <person name="Rieger M."/>
            <person name="Schaefer M."/>
            <person name="Mueller-Auer S."/>
            <person name="Gabel C."/>
            <person name="Fuchs M."/>
            <person name="Duesterhoeft A."/>
            <person name="Fritzc C."/>
            <person name="Holzer E."/>
            <person name="Moestl D."/>
            <person name="Hilbert H."/>
            <person name="Borzym K."/>
            <person name="Langer I."/>
            <person name="Beck A."/>
            <person name="Lehrach H."/>
            <person name="Reinhardt R."/>
            <person name="Pohl T.M."/>
            <person name="Eger P."/>
            <person name="Zimmermann W."/>
            <person name="Wedler H."/>
            <person name="Wambutt R."/>
            <person name="Purnelle B."/>
            <person name="Goffeau A."/>
            <person name="Cadieu E."/>
            <person name="Dreano S."/>
            <person name="Gloux S."/>
            <person name="Lelaure V."/>
            <person name="Mottier S."/>
            <person name="Galibert F."/>
            <person name="Aves S.J."/>
            <person name="Xiang Z."/>
            <person name="Hunt C."/>
            <person name="Moore K."/>
            <person name="Hurst S.M."/>
            <person name="Lucas M."/>
            <person name="Rochet M."/>
            <person name="Gaillardin C."/>
            <person name="Tallada V.A."/>
            <person name="Garzon A."/>
            <person name="Thode G."/>
            <person name="Daga R.R."/>
            <person name="Cruzado L."/>
            <person name="Jimenez J."/>
            <person name="Sanchez M."/>
            <person name="del Rey F."/>
            <person name="Benito J."/>
            <person name="Dominguez A."/>
            <person name="Revuelta J.L."/>
            <person name="Moreno S."/>
            <person name="Armstrong J."/>
            <person name="Forsburg S.L."/>
            <person name="Cerutti L."/>
            <person name="Lowe T."/>
            <person name="McCombie W.R."/>
            <person name="Paulsen I."/>
            <person name="Potashkin J."/>
            <person name="Shpakovski G.V."/>
            <person name="Ussery D."/>
            <person name="Barrell B.G."/>
            <person name="Nurse P."/>
        </authorList>
    </citation>
    <scope>NUCLEOTIDE SEQUENCE [LARGE SCALE GENOMIC DNA]</scope>
    <source>
        <strain>972 / ATCC 24843</strain>
    </source>
</reference>
<reference key="2">
    <citation type="journal article" date="2006" name="Nat. Biotechnol.">
        <title>ORFeome cloning and global analysis of protein localization in the fission yeast Schizosaccharomyces pombe.</title>
        <authorList>
            <person name="Matsuyama A."/>
            <person name="Arai R."/>
            <person name="Yashiroda Y."/>
            <person name="Shirai A."/>
            <person name="Kamata A."/>
            <person name="Sekido S."/>
            <person name="Kobayashi Y."/>
            <person name="Hashimoto A."/>
            <person name="Hamamoto M."/>
            <person name="Hiraoka Y."/>
            <person name="Horinouchi S."/>
            <person name="Yoshida M."/>
        </authorList>
    </citation>
    <scope>SUBCELLULAR LOCATION [LARGE SCALE ANALYSIS]</scope>
</reference>
<dbReference type="EMBL" id="CU329670">
    <property type="protein sequence ID" value="CAB10122.1"/>
    <property type="molecule type" value="Genomic_DNA"/>
</dbReference>
<dbReference type="PIR" id="T37998">
    <property type="entry name" value="T37998"/>
</dbReference>
<dbReference type="RefSeq" id="NP_594426.1">
    <property type="nucleotide sequence ID" value="NM_001019855.2"/>
</dbReference>
<dbReference type="SMR" id="O13850"/>
<dbReference type="BioGRID" id="279059">
    <property type="interactions" value="1"/>
</dbReference>
<dbReference type="FunCoup" id="O13850">
    <property type="interactions" value="159"/>
</dbReference>
<dbReference type="STRING" id="284812.O13850"/>
<dbReference type="PaxDb" id="4896-SPAC19G12.11.1"/>
<dbReference type="EnsemblFungi" id="SPAC19G12.11.1">
    <property type="protein sequence ID" value="SPAC19G12.11.1:pep"/>
    <property type="gene ID" value="SPAC19G12.11"/>
</dbReference>
<dbReference type="GeneID" id="2542605"/>
<dbReference type="KEGG" id="spo:2542605"/>
<dbReference type="PomBase" id="SPAC19G12.11">
    <property type="gene designation" value="coq9"/>
</dbReference>
<dbReference type="VEuPathDB" id="FungiDB:SPAC19G12.11"/>
<dbReference type="eggNOG" id="KOG2969">
    <property type="taxonomic scope" value="Eukaryota"/>
</dbReference>
<dbReference type="HOGENOM" id="CLU_057411_1_1_1"/>
<dbReference type="InParanoid" id="O13850"/>
<dbReference type="OMA" id="CAGFGWN"/>
<dbReference type="PhylomeDB" id="O13850"/>
<dbReference type="Reactome" id="R-SPO-2142789">
    <property type="pathway name" value="Ubiquinol biosynthesis"/>
</dbReference>
<dbReference type="UniPathway" id="UPA00232"/>
<dbReference type="PRO" id="PR:O13850"/>
<dbReference type="Proteomes" id="UP000002485">
    <property type="component" value="Chromosome I"/>
</dbReference>
<dbReference type="GO" id="GO:0005743">
    <property type="term" value="C:mitochondrial inner membrane"/>
    <property type="evidence" value="ECO:0000318"/>
    <property type="project" value="GO_Central"/>
</dbReference>
<dbReference type="GO" id="GO:0005739">
    <property type="term" value="C:mitochondrion"/>
    <property type="evidence" value="ECO:0000314"/>
    <property type="project" value="PomBase"/>
</dbReference>
<dbReference type="GO" id="GO:0008289">
    <property type="term" value="F:lipid binding"/>
    <property type="evidence" value="ECO:0000318"/>
    <property type="project" value="GO_Central"/>
</dbReference>
<dbReference type="GO" id="GO:0006744">
    <property type="term" value="P:ubiquinone biosynthetic process"/>
    <property type="evidence" value="ECO:0000315"/>
    <property type="project" value="PomBase"/>
</dbReference>
<dbReference type="FunFam" id="1.10.357.10:FF:000004">
    <property type="entry name" value="Ubiquinone biosynthesis protein COQ9, mitochondrial"/>
    <property type="match status" value="1"/>
</dbReference>
<dbReference type="Gene3D" id="1.10.357.10">
    <property type="entry name" value="Tetracycline Repressor, domain 2"/>
    <property type="match status" value="1"/>
</dbReference>
<dbReference type="InterPro" id="IPR013718">
    <property type="entry name" value="COQ9_C"/>
</dbReference>
<dbReference type="InterPro" id="IPR012762">
    <property type="entry name" value="Ubiq_biosynth_COQ9"/>
</dbReference>
<dbReference type="NCBIfam" id="TIGR02396">
    <property type="entry name" value="diverge_rpsU"/>
    <property type="match status" value="1"/>
</dbReference>
<dbReference type="PANTHER" id="PTHR21427">
    <property type="entry name" value="UBIQUINONE BIOSYNTHESIS PROTEIN COQ9, MITOCHONDRIAL"/>
    <property type="match status" value="1"/>
</dbReference>
<dbReference type="PANTHER" id="PTHR21427:SF19">
    <property type="entry name" value="UBIQUINONE BIOSYNTHESIS PROTEIN COQ9, MITOCHONDRIAL"/>
    <property type="match status" value="1"/>
</dbReference>
<dbReference type="Pfam" id="PF08511">
    <property type="entry name" value="COQ9"/>
    <property type="match status" value="1"/>
</dbReference>
<comment type="function">
    <text evidence="1 2">Membrane-associated protein that warps the membrane surface to access and bind aromatic isoprenes with high specificity, including ubiquinone (CoQ) isoprene intermediates and presents them directly to coq7, therefore facilitating the coq7-mediated hydroxylase step. Participates in the biosynthesis of coenzyme Q, also named ubiquinone, an essential lipid-soluble electron transporter for aerobic cellular respiration.</text>
</comment>
<comment type="pathway">
    <text evidence="2">Cofactor biosynthesis; ubiquinone biosynthesis.</text>
</comment>
<comment type="subcellular location">
    <subcellularLocation>
        <location evidence="4">Mitochondrion</location>
    </subcellularLocation>
</comment>
<comment type="similarity">
    <text evidence="5">Belongs to the COQ9 family.</text>
</comment>
<evidence type="ECO:0000250" key="1">
    <source>
        <dbReference type="UniProtKB" id="O75208"/>
    </source>
</evidence>
<evidence type="ECO:0000250" key="2">
    <source>
        <dbReference type="UniProtKB" id="Q05779"/>
    </source>
</evidence>
<evidence type="ECO:0000255" key="3"/>
<evidence type="ECO:0000269" key="4">
    <source>
    </source>
</evidence>
<evidence type="ECO:0000305" key="5"/>
<protein>
    <recommendedName>
        <fullName>Ubiquinone biosynthesis protein coq9, mitochondrial</fullName>
    </recommendedName>
</protein>
<proteinExistence type="inferred from homology"/>
<gene>
    <name type="primary">coq9</name>
    <name type="ORF">SPAC19G12.11</name>
</gene>
<name>COQ9_SCHPO</name>
<keyword id="KW-0446">Lipid-binding</keyword>
<keyword id="KW-0496">Mitochondrion</keyword>
<keyword id="KW-1185">Reference proteome</keyword>
<keyword id="KW-0809">Transit peptide</keyword>
<keyword id="KW-0831">Ubiquinone biosynthesis</keyword>
<feature type="transit peptide" description="Mitochondrion" evidence="3">
    <location>
        <begin position="1"/>
        <end status="unknown"/>
    </location>
</feature>
<feature type="chain" id="PRO_0000339135" description="Ubiquinone biosynthesis protein coq9, mitochondrial">
    <location>
        <begin status="unknown"/>
        <end position="250"/>
    </location>
</feature>
<feature type="binding site" evidence="1">
    <location>
        <begin position="181"/>
        <end position="184"/>
    </location>
    <ligand>
        <name>a 1,2-diacylglycero-3-phosphoethanolamine</name>
        <dbReference type="ChEBI" id="CHEBI:57613"/>
    </ligand>
</feature>